<keyword id="KW-1003">Cell membrane</keyword>
<keyword id="KW-0378">Hydrolase</keyword>
<keyword id="KW-0472">Membrane</keyword>
<keyword id="KW-0645">Protease</keyword>
<keyword id="KW-1185">Reference proteome</keyword>
<keyword id="KW-0720">Serine protease</keyword>
<keyword id="KW-0732">Signal</keyword>
<keyword id="KW-0812">Transmembrane</keyword>
<keyword id="KW-1133">Transmembrane helix</keyword>
<evidence type="ECO:0000255" key="1"/>
<evidence type="ECO:0000255" key="2">
    <source>
        <dbReference type="PROSITE-ProRule" id="PRU01240"/>
    </source>
</evidence>
<evidence type="ECO:0000256" key="3">
    <source>
        <dbReference type="SAM" id="MobiDB-lite"/>
    </source>
</evidence>
<evidence type="ECO:0000269" key="4">
    <source>
    </source>
</evidence>
<evidence type="ECO:0000269" key="5">
    <source>
    </source>
</evidence>
<evidence type="ECO:0000269" key="6">
    <source>
    </source>
</evidence>
<evidence type="ECO:0000303" key="7">
    <source>
    </source>
</evidence>
<evidence type="ECO:0000303" key="8">
    <source>
    </source>
</evidence>
<evidence type="ECO:0000305" key="9"/>
<evidence type="ECO:0000305" key="10">
    <source>
    </source>
</evidence>
<evidence type="ECO:0000312" key="11">
    <source>
        <dbReference type="EMBL" id="CCP46712.1"/>
    </source>
</evidence>
<protein>
    <recommendedName>
        <fullName evidence="7">Mycosin-1</fullName>
        <ecNumber evidence="6">3.4.21.-</ecNumber>
    </recommendedName>
    <alternativeName>
        <fullName evidence="8">MycP1 protease</fullName>
    </alternativeName>
</protein>
<dbReference type="EC" id="3.4.21.-" evidence="6"/>
<dbReference type="EMBL" id="AL123456">
    <property type="protein sequence ID" value="CCP46712.1"/>
    <property type="molecule type" value="Genomic_DNA"/>
</dbReference>
<dbReference type="RefSeq" id="NP_218400.1">
    <property type="nucleotide sequence ID" value="NC_000962.3"/>
</dbReference>
<dbReference type="RefSeq" id="WP_003400004.1">
    <property type="nucleotide sequence ID" value="NZ_NVQJ01000082.1"/>
</dbReference>
<dbReference type="SMR" id="O05461"/>
<dbReference type="FunCoup" id="O05461">
    <property type="interactions" value="34"/>
</dbReference>
<dbReference type="STRING" id="83332.Rv3883c"/>
<dbReference type="ChEMBL" id="CHEMBL5291511"/>
<dbReference type="MEROPS" id="S08.131"/>
<dbReference type="PaxDb" id="83332-Rv3883c"/>
<dbReference type="GeneID" id="45427886"/>
<dbReference type="GeneID" id="886217"/>
<dbReference type="KEGG" id="mtu:Rv3883c"/>
<dbReference type="KEGG" id="mtv:RVBD_3883c"/>
<dbReference type="PATRIC" id="fig|83332.111.peg.4323"/>
<dbReference type="TubercuList" id="Rv3883c"/>
<dbReference type="eggNOG" id="COG1404">
    <property type="taxonomic scope" value="Bacteria"/>
</dbReference>
<dbReference type="HOGENOM" id="CLU_011263_13_1_11"/>
<dbReference type="InParanoid" id="O05461"/>
<dbReference type="OrthoDB" id="9798386at2"/>
<dbReference type="PhylomeDB" id="O05461"/>
<dbReference type="Proteomes" id="UP000001584">
    <property type="component" value="Chromosome"/>
</dbReference>
<dbReference type="GO" id="GO:0009986">
    <property type="term" value="C:cell surface"/>
    <property type="evidence" value="ECO:0000314"/>
    <property type="project" value="MTBBASE"/>
</dbReference>
<dbReference type="GO" id="GO:0005886">
    <property type="term" value="C:plasma membrane"/>
    <property type="evidence" value="ECO:0000314"/>
    <property type="project" value="MTBBASE"/>
</dbReference>
<dbReference type="GO" id="GO:0004252">
    <property type="term" value="F:serine-type endopeptidase activity"/>
    <property type="evidence" value="ECO:0000314"/>
    <property type="project" value="MTBBASE"/>
</dbReference>
<dbReference type="GO" id="GO:0016485">
    <property type="term" value="P:protein processing"/>
    <property type="evidence" value="ECO:0000318"/>
    <property type="project" value="GO_Central"/>
</dbReference>
<dbReference type="GO" id="GO:0006508">
    <property type="term" value="P:proteolysis"/>
    <property type="evidence" value="ECO:0000314"/>
    <property type="project" value="MTBBASE"/>
</dbReference>
<dbReference type="GO" id="GO:0051046">
    <property type="term" value="P:regulation of secretion"/>
    <property type="evidence" value="ECO:0000314"/>
    <property type="project" value="MTBBASE"/>
</dbReference>
<dbReference type="GO" id="GO:0044003">
    <property type="term" value="P:symbiont-mediated perturbation of host process"/>
    <property type="evidence" value="ECO:0000314"/>
    <property type="project" value="MTBBASE"/>
</dbReference>
<dbReference type="FunFam" id="3.40.50.200:FF:000018">
    <property type="entry name" value="Type VII secretion-associated serine protease mycosin"/>
    <property type="match status" value="1"/>
</dbReference>
<dbReference type="Gene3D" id="3.40.50.200">
    <property type="entry name" value="Peptidase S8/S53 domain"/>
    <property type="match status" value="1"/>
</dbReference>
<dbReference type="InterPro" id="IPR000209">
    <property type="entry name" value="Peptidase_S8/S53_dom"/>
</dbReference>
<dbReference type="InterPro" id="IPR036852">
    <property type="entry name" value="Peptidase_S8/S53_dom_sf"/>
</dbReference>
<dbReference type="InterPro" id="IPR015500">
    <property type="entry name" value="Peptidase_S8_subtilisin-rel"/>
</dbReference>
<dbReference type="InterPro" id="IPR023834">
    <property type="entry name" value="T7SS_pept_S8A_mycosin"/>
</dbReference>
<dbReference type="NCBIfam" id="TIGR03921">
    <property type="entry name" value="T7SS_mycosin"/>
    <property type="match status" value="1"/>
</dbReference>
<dbReference type="PANTHER" id="PTHR42884:SF14">
    <property type="entry name" value="NEUROENDOCRINE CONVERTASE 1"/>
    <property type="match status" value="1"/>
</dbReference>
<dbReference type="PANTHER" id="PTHR42884">
    <property type="entry name" value="PROPROTEIN CONVERTASE SUBTILISIN/KEXIN-RELATED"/>
    <property type="match status" value="1"/>
</dbReference>
<dbReference type="Pfam" id="PF00082">
    <property type="entry name" value="Peptidase_S8"/>
    <property type="match status" value="1"/>
</dbReference>
<dbReference type="PRINTS" id="PR00723">
    <property type="entry name" value="SUBTILISIN"/>
</dbReference>
<dbReference type="SUPFAM" id="SSF52743">
    <property type="entry name" value="Subtilisin-like"/>
    <property type="match status" value="1"/>
</dbReference>
<dbReference type="PROSITE" id="PS51892">
    <property type="entry name" value="SUBTILASE"/>
    <property type="match status" value="1"/>
</dbReference>
<reference key="1">
    <citation type="journal article" date="1998" name="Nature">
        <title>Deciphering the biology of Mycobacterium tuberculosis from the complete genome sequence.</title>
        <authorList>
            <person name="Cole S.T."/>
            <person name="Brosch R."/>
            <person name="Parkhill J."/>
            <person name="Garnier T."/>
            <person name="Churcher C.M."/>
            <person name="Harris D.E."/>
            <person name="Gordon S.V."/>
            <person name="Eiglmeier K."/>
            <person name="Gas S."/>
            <person name="Barry C.E. III"/>
            <person name="Tekaia F."/>
            <person name="Badcock K."/>
            <person name="Basham D."/>
            <person name="Brown D."/>
            <person name="Chillingworth T."/>
            <person name="Connor R."/>
            <person name="Davies R.M."/>
            <person name="Devlin K."/>
            <person name="Feltwell T."/>
            <person name="Gentles S."/>
            <person name="Hamlin N."/>
            <person name="Holroyd S."/>
            <person name="Hornsby T."/>
            <person name="Jagels K."/>
            <person name="Krogh A."/>
            <person name="McLean J."/>
            <person name="Moule S."/>
            <person name="Murphy L.D."/>
            <person name="Oliver S."/>
            <person name="Osborne J."/>
            <person name="Quail M.A."/>
            <person name="Rajandream M.A."/>
            <person name="Rogers J."/>
            <person name="Rutter S."/>
            <person name="Seeger K."/>
            <person name="Skelton S."/>
            <person name="Squares S."/>
            <person name="Squares R."/>
            <person name="Sulston J.E."/>
            <person name="Taylor K."/>
            <person name="Whitehead S."/>
            <person name="Barrell B.G."/>
        </authorList>
    </citation>
    <scope>NUCLEOTIDE SEQUENCE [LARGE SCALE GENOMIC DNA]</scope>
    <source>
        <strain>ATCC 25618 / H37Rv</strain>
    </source>
</reference>
<reference key="2">
    <citation type="journal article" date="2000" name="Gene">
        <title>The mycosins of Mycobacterium tuberculosis H37Rv: a family of subtilisin-like serine proteases.</title>
        <authorList>
            <person name="Brown G.D."/>
            <person name="Dave J.A."/>
            <person name="Gey van Pittius N.C."/>
            <person name="Stevens L."/>
            <person name="Ehlers M.R."/>
            <person name="Beyers A.D."/>
        </authorList>
    </citation>
    <scope>SUBCELLULAR LOCATION</scope>
    <scope>INDUCTION</scope>
    <source>
        <strain>H37Rv</strain>
    </source>
</reference>
<reference key="3">
    <citation type="journal article" date="2002" name="BMC Microbiol.">
        <title>Mycosin-1, a subtilisin-like serine protease of Mycobacterium tuberculosis, is cell wall-associated and expressed during infection of macrophages.</title>
        <authorList>
            <person name="Dave J.A."/>
            <person name="Gey van Pittius N.C."/>
            <person name="Beyers A.D."/>
            <person name="Ehlers M.R."/>
            <person name="Brown G.D."/>
        </authorList>
    </citation>
    <scope>SUBCELLULAR LOCATION</scope>
    <scope>INDUCTION</scope>
</reference>
<reference key="4">
    <citation type="journal article" date="2010" name="Cell Host Microbe">
        <title>Mycobacterium tuberculosis MycP1 protease plays a dual role in regulation of ESX-1 secretion and virulence.</title>
        <authorList>
            <person name="Ohol Y.M."/>
            <person name="Goetz D.H."/>
            <person name="Chan K."/>
            <person name="Shiloh M.U."/>
            <person name="Craik C.S."/>
            <person name="Cox J.S."/>
        </authorList>
    </citation>
    <scope>FUNCTION</scope>
    <scope>DISRUPTION PHENOTYPE</scope>
    <scope>MUTAGENESIS OF SER-332</scope>
    <source>
        <strain>ATCC 35801 / TMC 107 / Erdman</strain>
    </source>
</reference>
<reference key="5">
    <citation type="journal article" date="2011" name="Mol. Cell. Proteomics">
        <title>Proteogenomic analysis of Mycobacterium tuberculosis by high resolution mass spectrometry.</title>
        <authorList>
            <person name="Kelkar D.S."/>
            <person name="Kumar D."/>
            <person name="Kumar P."/>
            <person name="Balakrishnan L."/>
            <person name="Muthusamy B."/>
            <person name="Yadav A.K."/>
            <person name="Shrivastava P."/>
            <person name="Marimuthu A."/>
            <person name="Anand S."/>
            <person name="Sundaram H."/>
            <person name="Kingsbury R."/>
            <person name="Harsha H.C."/>
            <person name="Nair B."/>
            <person name="Prasad T.S."/>
            <person name="Chauhan D.S."/>
            <person name="Katoch K."/>
            <person name="Katoch V.M."/>
            <person name="Kumar P."/>
            <person name="Chaerkady R."/>
            <person name="Ramachandran S."/>
            <person name="Dash D."/>
            <person name="Pandey A."/>
        </authorList>
    </citation>
    <scope>IDENTIFICATION BY MASS SPECTROMETRY [LARGE SCALE ANALYSIS]</scope>
    <source>
        <strain>ATCC 25618 / H37Rv</strain>
    </source>
</reference>
<sequence length="446" mass="45118">MHRIFLITVALALLTASPASAITPPPIDPGALPPDVTGPDQPTEQRVLCASPTTLPGSGFHDPPWSNTYLGVADAHKFATGAGVTVAVIDTGVDASPRVPAEPGGDFVDQAGNGLSDCDAHGTLTASIIAGRPAPTDGFVGVAPDARLLSLRQTSEAFEPVGSQANPNDPNATPAAGSIRSLARAVVHAANLGVGVINISEAACYKVSRPIDETSLGASIDYAVNVKGVVVVVAAGNTGGDCVQNPAPDPSTPGDPRGWNNVQTVVTPAWYAPLVLSVGGIGQTGMPSSFSMHGPWVDVAAPAENIVALGDTGEPVNALQGREGPVPIAGTSFAAAYVSGLAALLRQRFPDLTPAQIIHRITATARHPGGGVDDLVGAGVIDAVAALTWDIPPGPASAPYNVRRLPPPVVEPGPDRRPITAVALVAVGLTLALGLGALARRALSRR</sequence>
<proteinExistence type="evidence at protein level"/>
<feature type="signal peptide" evidence="1">
    <location>
        <begin position="1"/>
        <end position="21"/>
    </location>
</feature>
<feature type="chain" id="PRO_5007696644" description="Mycosin-1">
    <location>
        <begin position="22"/>
        <end position="446"/>
    </location>
</feature>
<feature type="transmembrane region" description="Helical" evidence="1">
    <location>
        <begin position="419"/>
        <end position="439"/>
    </location>
</feature>
<feature type="domain" description="Peptidase S8" evidence="2">
    <location>
        <begin position="64"/>
        <end position="387"/>
    </location>
</feature>
<feature type="region of interest" description="Disordered" evidence="3">
    <location>
        <begin position="24"/>
        <end position="43"/>
    </location>
</feature>
<feature type="active site" description="Charge relay system" evidence="2">
    <location>
        <position position="90"/>
    </location>
</feature>
<feature type="active site" description="Charge relay system" evidence="2">
    <location>
        <position position="121"/>
    </location>
</feature>
<feature type="active site" description="Charge relay system" evidence="2">
    <location>
        <position position="332"/>
    </location>
</feature>
<feature type="mutagenesis site" description="Lack of protease activity. Has hyperactivated ESX-1 secretion during macrophage infection, resulting in increased innate immune signaling. Secretes full-length EspB." evidence="6">
    <original>S</original>
    <variation>A</variation>
    <location>
        <position position="332"/>
    </location>
</feature>
<comment type="function">
    <text evidence="6">May play a dual role in regulation of ESX-1 secretion and virulence. Acts as a protease that cleaves EspB. Essential for ESX-1 function, required for early replication in macrophages and full virulence in mice.</text>
</comment>
<comment type="subcellular location">
    <subcellularLocation>
        <location evidence="4 5">Cell membrane</location>
        <topology evidence="1">Single-pass membrane protein</topology>
    </subcellularLocation>
    <text evidence="4 5">Cell wall-associated.</text>
</comment>
<comment type="induction">
    <text evidence="4 5">Constitutively expressed during growth in culture (PubMed:10974545). Induced during growth in macrophages (PubMed:12366866).</text>
</comment>
<comment type="disruption phenotype">
    <text evidence="6">Deletion mutant fails to secrete EsxA and EspB and replicates poorly in mice.</text>
</comment>
<comment type="similarity">
    <text evidence="9">Belongs to the peptidase S8 family.</text>
</comment>
<comment type="caution">
    <text evidence="10">Was originally thought to be proteolytically processed intracellularly.</text>
</comment>
<name>MYCP1_MYCTU</name>
<organism>
    <name type="scientific">Mycobacterium tuberculosis (strain ATCC 25618 / H37Rv)</name>
    <dbReference type="NCBI Taxonomy" id="83332"/>
    <lineage>
        <taxon>Bacteria</taxon>
        <taxon>Bacillati</taxon>
        <taxon>Actinomycetota</taxon>
        <taxon>Actinomycetes</taxon>
        <taxon>Mycobacteriales</taxon>
        <taxon>Mycobacteriaceae</taxon>
        <taxon>Mycobacterium</taxon>
        <taxon>Mycobacterium tuberculosis complex</taxon>
    </lineage>
</organism>
<gene>
    <name evidence="7" type="primary">mycP1</name>
    <name evidence="11" type="ordered locus">Rv3883c</name>
</gene>
<accession>O05461</accession>
<accession>F2GDP4</accession>
<accession>I6YD96</accession>
<accession>L0TFJ1</accession>